<gene>
    <name evidence="1" type="primary">rpsM</name>
    <name type="ordered locus">STH3050</name>
</gene>
<accession>Q67JW8</accession>
<protein>
    <recommendedName>
        <fullName evidence="1">Small ribosomal subunit protein uS13</fullName>
    </recommendedName>
    <alternativeName>
        <fullName evidence="3">30S ribosomal protein S13</fullName>
    </alternativeName>
</protein>
<dbReference type="EMBL" id="AP006840">
    <property type="protein sequence ID" value="BAD42032.1"/>
    <property type="molecule type" value="Genomic_DNA"/>
</dbReference>
<dbReference type="RefSeq" id="WP_011197165.1">
    <property type="nucleotide sequence ID" value="NC_006177.1"/>
</dbReference>
<dbReference type="SMR" id="Q67JW8"/>
<dbReference type="STRING" id="292459.STH3050"/>
<dbReference type="KEGG" id="sth:STH3050"/>
<dbReference type="eggNOG" id="COG0099">
    <property type="taxonomic scope" value="Bacteria"/>
</dbReference>
<dbReference type="HOGENOM" id="CLU_103849_1_2_9"/>
<dbReference type="OrthoDB" id="9803610at2"/>
<dbReference type="Proteomes" id="UP000000417">
    <property type="component" value="Chromosome"/>
</dbReference>
<dbReference type="GO" id="GO:0005829">
    <property type="term" value="C:cytosol"/>
    <property type="evidence" value="ECO:0007669"/>
    <property type="project" value="TreeGrafter"/>
</dbReference>
<dbReference type="GO" id="GO:0015935">
    <property type="term" value="C:small ribosomal subunit"/>
    <property type="evidence" value="ECO:0007669"/>
    <property type="project" value="TreeGrafter"/>
</dbReference>
<dbReference type="GO" id="GO:0019843">
    <property type="term" value="F:rRNA binding"/>
    <property type="evidence" value="ECO:0007669"/>
    <property type="project" value="UniProtKB-UniRule"/>
</dbReference>
<dbReference type="GO" id="GO:0003735">
    <property type="term" value="F:structural constituent of ribosome"/>
    <property type="evidence" value="ECO:0007669"/>
    <property type="project" value="InterPro"/>
</dbReference>
<dbReference type="GO" id="GO:0000049">
    <property type="term" value="F:tRNA binding"/>
    <property type="evidence" value="ECO:0007669"/>
    <property type="project" value="UniProtKB-UniRule"/>
</dbReference>
<dbReference type="GO" id="GO:0006412">
    <property type="term" value="P:translation"/>
    <property type="evidence" value="ECO:0007669"/>
    <property type="project" value="UniProtKB-UniRule"/>
</dbReference>
<dbReference type="FunFam" id="1.10.8.50:FF:000001">
    <property type="entry name" value="30S ribosomal protein S13"/>
    <property type="match status" value="1"/>
</dbReference>
<dbReference type="FunFam" id="4.10.910.10:FF:000001">
    <property type="entry name" value="30S ribosomal protein S13"/>
    <property type="match status" value="1"/>
</dbReference>
<dbReference type="Gene3D" id="1.10.8.50">
    <property type="match status" value="1"/>
</dbReference>
<dbReference type="Gene3D" id="4.10.910.10">
    <property type="entry name" value="30s ribosomal protein s13, domain 2"/>
    <property type="match status" value="1"/>
</dbReference>
<dbReference type="HAMAP" id="MF_01315">
    <property type="entry name" value="Ribosomal_uS13"/>
    <property type="match status" value="1"/>
</dbReference>
<dbReference type="InterPro" id="IPR027437">
    <property type="entry name" value="Rbsml_uS13_C"/>
</dbReference>
<dbReference type="InterPro" id="IPR001892">
    <property type="entry name" value="Ribosomal_uS13"/>
</dbReference>
<dbReference type="InterPro" id="IPR010979">
    <property type="entry name" value="Ribosomal_uS13-like_H2TH"/>
</dbReference>
<dbReference type="InterPro" id="IPR019980">
    <property type="entry name" value="Ribosomal_uS13_bac-type"/>
</dbReference>
<dbReference type="InterPro" id="IPR018269">
    <property type="entry name" value="Ribosomal_uS13_CS"/>
</dbReference>
<dbReference type="NCBIfam" id="TIGR03631">
    <property type="entry name" value="uS13_bact"/>
    <property type="match status" value="1"/>
</dbReference>
<dbReference type="PANTHER" id="PTHR10871">
    <property type="entry name" value="30S RIBOSOMAL PROTEIN S13/40S RIBOSOMAL PROTEIN S18"/>
    <property type="match status" value="1"/>
</dbReference>
<dbReference type="PANTHER" id="PTHR10871:SF1">
    <property type="entry name" value="SMALL RIBOSOMAL SUBUNIT PROTEIN US13M"/>
    <property type="match status" value="1"/>
</dbReference>
<dbReference type="Pfam" id="PF00416">
    <property type="entry name" value="Ribosomal_S13"/>
    <property type="match status" value="1"/>
</dbReference>
<dbReference type="PIRSF" id="PIRSF002134">
    <property type="entry name" value="Ribosomal_S13"/>
    <property type="match status" value="1"/>
</dbReference>
<dbReference type="SUPFAM" id="SSF46946">
    <property type="entry name" value="S13-like H2TH domain"/>
    <property type="match status" value="1"/>
</dbReference>
<dbReference type="PROSITE" id="PS00646">
    <property type="entry name" value="RIBOSOMAL_S13_1"/>
    <property type="match status" value="1"/>
</dbReference>
<dbReference type="PROSITE" id="PS50159">
    <property type="entry name" value="RIBOSOMAL_S13_2"/>
    <property type="match status" value="1"/>
</dbReference>
<evidence type="ECO:0000255" key="1">
    <source>
        <dbReference type="HAMAP-Rule" id="MF_01315"/>
    </source>
</evidence>
<evidence type="ECO:0000256" key="2">
    <source>
        <dbReference type="SAM" id="MobiDB-lite"/>
    </source>
</evidence>
<evidence type="ECO:0000305" key="3"/>
<comment type="function">
    <text evidence="1">Located at the top of the head of the 30S subunit, it contacts several helices of the 16S rRNA. In the 70S ribosome it contacts the 23S rRNA (bridge B1a) and protein L5 of the 50S subunit (bridge B1b), connecting the 2 subunits; these bridges are implicated in subunit movement. Contacts the tRNAs in the A and P-sites.</text>
</comment>
<comment type="subunit">
    <text evidence="1">Part of the 30S ribosomal subunit. Forms a loose heterodimer with protein S19. Forms two bridges to the 50S subunit in the 70S ribosome.</text>
</comment>
<comment type="similarity">
    <text evidence="1">Belongs to the universal ribosomal protein uS13 family.</text>
</comment>
<feature type="chain" id="PRO_0000230572" description="Small ribosomal subunit protein uS13">
    <location>
        <begin position="1"/>
        <end position="124"/>
    </location>
</feature>
<feature type="region of interest" description="Disordered" evidence="2">
    <location>
        <begin position="96"/>
        <end position="124"/>
    </location>
</feature>
<proteinExistence type="inferred from homology"/>
<sequence>MARIAGVDLPRDKRIEAALPYIYGIGWSLSREILKKTGIDPDTRVRDLTEEQVAKLREVIDHEYKVEGDLQREVQMNIKRLIEIGCYRGLRHRRGLPVRGQRTKTNARTRKGPRRTVAGKKKAK</sequence>
<organism>
    <name type="scientific">Symbiobacterium thermophilum (strain DSM 24528 / JCM 14929 / IAM 14863 / T)</name>
    <dbReference type="NCBI Taxonomy" id="292459"/>
    <lineage>
        <taxon>Bacteria</taxon>
        <taxon>Bacillati</taxon>
        <taxon>Bacillota</taxon>
        <taxon>Clostridia</taxon>
        <taxon>Eubacteriales</taxon>
        <taxon>Symbiobacteriaceae</taxon>
        <taxon>Symbiobacterium</taxon>
    </lineage>
</organism>
<name>RS13_SYMTH</name>
<keyword id="KW-1185">Reference proteome</keyword>
<keyword id="KW-0687">Ribonucleoprotein</keyword>
<keyword id="KW-0689">Ribosomal protein</keyword>
<keyword id="KW-0694">RNA-binding</keyword>
<keyword id="KW-0699">rRNA-binding</keyword>
<keyword id="KW-0820">tRNA-binding</keyword>
<reference key="1">
    <citation type="journal article" date="2004" name="Nucleic Acids Res.">
        <title>Genome sequence of Symbiobacterium thermophilum, an uncultivable bacterium that depends on microbial commensalism.</title>
        <authorList>
            <person name="Ueda K."/>
            <person name="Yamashita A."/>
            <person name="Ishikawa J."/>
            <person name="Shimada M."/>
            <person name="Watsuji T."/>
            <person name="Morimura K."/>
            <person name="Ikeda H."/>
            <person name="Hattori M."/>
            <person name="Beppu T."/>
        </authorList>
    </citation>
    <scope>NUCLEOTIDE SEQUENCE [LARGE SCALE GENOMIC DNA]</scope>
    <source>
        <strain>DSM 24528 / JCM 14929 / IAM 14863 / T</strain>
    </source>
</reference>